<name>BGAL_VIBC3</name>
<dbReference type="EC" id="3.2.1.23" evidence="1"/>
<dbReference type="EMBL" id="CP000627">
    <property type="protein sequence ID" value="ABQ20296.1"/>
    <property type="status" value="ALT_INIT"/>
    <property type="molecule type" value="Genomic_DNA"/>
</dbReference>
<dbReference type="EMBL" id="CP001235">
    <property type="protein sequence ID" value="ACP10443.1"/>
    <property type="status" value="ALT_INIT"/>
    <property type="molecule type" value="Genomic_DNA"/>
</dbReference>
<dbReference type="RefSeq" id="WP_001243585.1">
    <property type="nucleotide sequence ID" value="NZ_JAACZH010000008.1"/>
</dbReference>
<dbReference type="SMR" id="A5F5U6"/>
<dbReference type="CAZy" id="GH2">
    <property type="family name" value="Glycoside Hydrolase Family 2"/>
</dbReference>
<dbReference type="KEGG" id="vco:VC0395_A1917"/>
<dbReference type="KEGG" id="vcr:VC395_2453"/>
<dbReference type="PATRIC" id="fig|345073.21.peg.2357"/>
<dbReference type="eggNOG" id="COG3250">
    <property type="taxonomic scope" value="Bacteria"/>
</dbReference>
<dbReference type="HOGENOM" id="CLU_002346_0_2_6"/>
<dbReference type="OrthoDB" id="9758603at2"/>
<dbReference type="Proteomes" id="UP000000249">
    <property type="component" value="Chromosome 2"/>
</dbReference>
<dbReference type="GO" id="GO:0009341">
    <property type="term" value="C:beta-galactosidase complex"/>
    <property type="evidence" value="ECO:0007669"/>
    <property type="project" value="InterPro"/>
</dbReference>
<dbReference type="GO" id="GO:0004565">
    <property type="term" value="F:beta-galactosidase activity"/>
    <property type="evidence" value="ECO:0007669"/>
    <property type="project" value="UniProtKB-EC"/>
</dbReference>
<dbReference type="GO" id="GO:0030246">
    <property type="term" value="F:carbohydrate binding"/>
    <property type="evidence" value="ECO:0007669"/>
    <property type="project" value="InterPro"/>
</dbReference>
<dbReference type="GO" id="GO:0000287">
    <property type="term" value="F:magnesium ion binding"/>
    <property type="evidence" value="ECO:0007669"/>
    <property type="project" value="UniProtKB-UniRule"/>
</dbReference>
<dbReference type="GO" id="GO:0005990">
    <property type="term" value="P:lactose catabolic process"/>
    <property type="evidence" value="ECO:0007669"/>
    <property type="project" value="TreeGrafter"/>
</dbReference>
<dbReference type="FunFam" id="3.20.20.80:FF:000018">
    <property type="entry name" value="Beta-galactosidase"/>
    <property type="match status" value="1"/>
</dbReference>
<dbReference type="Gene3D" id="2.70.98.10">
    <property type="match status" value="1"/>
</dbReference>
<dbReference type="Gene3D" id="2.60.120.260">
    <property type="entry name" value="Galactose-binding domain-like"/>
    <property type="match status" value="1"/>
</dbReference>
<dbReference type="Gene3D" id="3.20.20.80">
    <property type="entry name" value="Glycosidases"/>
    <property type="match status" value="1"/>
</dbReference>
<dbReference type="Gene3D" id="2.60.40.10">
    <property type="entry name" value="Immunoglobulins"/>
    <property type="match status" value="2"/>
</dbReference>
<dbReference type="HAMAP" id="MF_01687">
    <property type="entry name" value="Beta_gal"/>
    <property type="match status" value="1"/>
</dbReference>
<dbReference type="InterPro" id="IPR004199">
    <property type="entry name" value="B-gal_small/dom_5"/>
</dbReference>
<dbReference type="InterPro" id="IPR050347">
    <property type="entry name" value="Bact_Beta-galactosidase"/>
</dbReference>
<dbReference type="InterPro" id="IPR036156">
    <property type="entry name" value="Beta-gal/glucu_dom_sf"/>
</dbReference>
<dbReference type="InterPro" id="IPR011013">
    <property type="entry name" value="Gal_mutarotase_sf_dom"/>
</dbReference>
<dbReference type="InterPro" id="IPR008979">
    <property type="entry name" value="Galactose-bd-like_sf"/>
</dbReference>
<dbReference type="InterPro" id="IPR014718">
    <property type="entry name" value="GH-type_carb-bd"/>
</dbReference>
<dbReference type="InterPro" id="IPR006101">
    <property type="entry name" value="Glyco_hydro_2"/>
</dbReference>
<dbReference type="InterPro" id="IPR023232">
    <property type="entry name" value="Glyco_hydro_2_AS"/>
</dbReference>
<dbReference type="InterPro" id="IPR023933">
    <property type="entry name" value="Glyco_hydro_2_beta_Galsidase"/>
</dbReference>
<dbReference type="InterPro" id="IPR006103">
    <property type="entry name" value="Glyco_hydro_2_cat"/>
</dbReference>
<dbReference type="InterPro" id="IPR023230">
    <property type="entry name" value="Glyco_hydro_2_CS"/>
</dbReference>
<dbReference type="InterPro" id="IPR006102">
    <property type="entry name" value="Glyco_hydro_2_Ig-like"/>
</dbReference>
<dbReference type="InterPro" id="IPR006104">
    <property type="entry name" value="Glyco_hydro_2_N"/>
</dbReference>
<dbReference type="InterPro" id="IPR017853">
    <property type="entry name" value="Glycoside_hydrolase_SF"/>
</dbReference>
<dbReference type="InterPro" id="IPR013783">
    <property type="entry name" value="Ig-like_fold"/>
</dbReference>
<dbReference type="InterPro" id="IPR032312">
    <property type="entry name" value="LacZ_4"/>
</dbReference>
<dbReference type="NCBIfam" id="NF007074">
    <property type="entry name" value="PRK09525.1"/>
    <property type="match status" value="1"/>
</dbReference>
<dbReference type="PANTHER" id="PTHR46323">
    <property type="entry name" value="BETA-GALACTOSIDASE"/>
    <property type="match status" value="1"/>
</dbReference>
<dbReference type="PANTHER" id="PTHR46323:SF2">
    <property type="entry name" value="BETA-GALACTOSIDASE"/>
    <property type="match status" value="1"/>
</dbReference>
<dbReference type="Pfam" id="PF02929">
    <property type="entry name" value="Bgal_small_N"/>
    <property type="match status" value="1"/>
</dbReference>
<dbReference type="Pfam" id="PF00703">
    <property type="entry name" value="Glyco_hydro_2"/>
    <property type="match status" value="1"/>
</dbReference>
<dbReference type="Pfam" id="PF02836">
    <property type="entry name" value="Glyco_hydro_2_C"/>
    <property type="match status" value="1"/>
</dbReference>
<dbReference type="Pfam" id="PF02837">
    <property type="entry name" value="Glyco_hydro_2_N"/>
    <property type="match status" value="1"/>
</dbReference>
<dbReference type="Pfam" id="PF16353">
    <property type="entry name" value="LacZ_4"/>
    <property type="match status" value="1"/>
</dbReference>
<dbReference type="PRINTS" id="PR00132">
    <property type="entry name" value="GLHYDRLASE2"/>
</dbReference>
<dbReference type="SMART" id="SM01038">
    <property type="entry name" value="Bgal_small_N"/>
    <property type="match status" value="1"/>
</dbReference>
<dbReference type="SUPFAM" id="SSF51445">
    <property type="entry name" value="(Trans)glycosidases"/>
    <property type="match status" value="1"/>
</dbReference>
<dbReference type="SUPFAM" id="SSF49303">
    <property type="entry name" value="beta-Galactosidase/glucuronidase domain"/>
    <property type="match status" value="2"/>
</dbReference>
<dbReference type="SUPFAM" id="SSF74650">
    <property type="entry name" value="Galactose mutarotase-like"/>
    <property type="match status" value="1"/>
</dbReference>
<dbReference type="SUPFAM" id="SSF49785">
    <property type="entry name" value="Galactose-binding domain-like"/>
    <property type="match status" value="1"/>
</dbReference>
<dbReference type="PROSITE" id="PS00719">
    <property type="entry name" value="GLYCOSYL_HYDROL_F2_1"/>
    <property type="match status" value="1"/>
</dbReference>
<dbReference type="PROSITE" id="PS00608">
    <property type="entry name" value="GLYCOSYL_HYDROL_F2_2"/>
    <property type="match status" value="1"/>
</dbReference>
<accession>A5F5U6</accession>
<accession>C3M461</accession>
<proteinExistence type="inferred from homology"/>
<feature type="chain" id="PRO_0000367011" description="Beta-galactosidase">
    <location>
        <begin position="1"/>
        <end position="1024"/>
    </location>
</feature>
<feature type="active site" description="Proton donor" evidence="1">
    <location>
        <position position="459"/>
    </location>
</feature>
<feature type="active site" description="Nucleophile" evidence="1">
    <location>
        <position position="535"/>
    </location>
</feature>
<feature type="binding site" evidence="1">
    <location>
        <position position="100"/>
    </location>
    <ligand>
        <name>substrate</name>
    </ligand>
</feature>
<feature type="binding site" evidence="1">
    <location>
        <position position="198"/>
    </location>
    <ligand>
        <name>Na(+)</name>
        <dbReference type="ChEBI" id="CHEBI:29101"/>
    </ligand>
</feature>
<feature type="binding site" evidence="1">
    <location>
        <position position="198"/>
    </location>
    <ligand>
        <name>substrate</name>
    </ligand>
</feature>
<feature type="binding site" evidence="1">
    <location>
        <position position="414"/>
    </location>
    <ligand>
        <name>Mg(2+)</name>
        <dbReference type="ChEBI" id="CHEBI:18420"/>
        <label>1</label>
    </ligand>
</feature>
<feature type="binding site" evidence="1">
    <location>
        <position position="416"/>
    </location>
    <ligand>
        <name>Mg(2+)</name>
        <dbReference type="ChEBI" id="CHEBI:18420"/>
        <label>1</label>
    </ligand>
</feature>
<feature type="binding site" evidence="1">
    <location>
        <position position="459"/>
    </location>
    <ligand>
        <name>Mg(2+)</name>
        <dbReference type="ChEBI" id="CHEBI:18420"/>
        <label>1</label>
    </ligand>
</feature>
<feature type="binding site" evidence="1">
    <location>
        <position position="459"/>
    </location>
    <ligand>
        <name>substrate</name>
    </ligand>
</feature>
<feature type="binding site" evidence="1">
    <location>
        <begin position="535"/>
        <end position="538"/>
    </location>
    <ligand>
        <name>substrate</name>
    </ligand>
</feature>
<feature type="binding site" evidence="1">
    <location>
        <position position="595"/>
    </location>
    <ligand>
        <name>Mg(2+)</name>
        <dbReference type="ChEBI" id="CHEBI:18420"/>
        <label>2</label>
    </ligand>
</feature>
<feature type="binding site" evidence="1">
    <location>
        <position position="599"/>
    </location>
    <ligand>
        <name>Na(+)</name>
        <dbReference type="ChEBI" id="CHEBI:29101"/>
    </ligand>
</feature>
<feature type="binding site" evidence="1">
    <location>
        <position position="602"/>
    </location>
    <ligand>
        <name>Na(+)</name>
        <dbReference type="ChEBI" id="CHEBI:29101"/>
    </ligand>
</feature>
<feature type="binding site" evidence="1">
    <location>
        <position position="602"/>
    </location>
    <ligand>
        <name>substrate</name>
    </ligand>
</feature>
<feature type="binding site" evidence="1">
    <location>
        <position position="995"/>
    </location>
    <ligand>
        <name>substrate</name>
    </ligand>
</feature>
<feature type="site" description="Transition state stabilizer" evidence="1">
    <location>
        <position position="355"/>
    </location>
</feature>
<feature type="site" description="Transition state stabilizer" evidence="1">
    <location>
        <position position="389"/>
    </location>
</feature>
<reference key="1">
    <citation type="submission" date="2007-03" db="EMBL/GenBank/DDBJ databases">
        <authorList>
            <person name="Heidelberg J."/>
        </authorList>
    </citation>
    <scope>NUCLEOTIDE SEQUENCE [LARGE SCALE GENOMIC DNA]</scope>
    <source>
        <strain>ATCC 39541 / Classical Ogawa 395 / O395</strain>
    </source>
</reference>
<reference key="2">
    <citation type="journal article" date="2008" name="PLoS ONE">
        <title>A recalibrated molecular clock and independent origins for the cholera pandemic clones.</title>
        <authorList>
            <person name="Feng L."/>
            <person name="Reeves P.R."/>
            <person name="Lan R."/>
            <person name="Ren Y."/>
            <person name="Gao C."/>
            <person name="Zhou Z."/>
            <person name="Ren Y."/>
            <person name="Cheng J."/>
            <person name="Wang W."/>
            <person name="Wang J."/>
            <person name="Qian W."/>
            <person name="Li D."/>
            <person name="Wang L."/>
        </authorList>
    </citation>
    <scope>NUCLEOTIDE SEQUENCE [LARGE SCALE GENOMIC DNA]</scope>
    <source>
        <strain>ATCC 39541 / Classical Ogawa 395 / O395</strain>
    </source>
</reference>
<sequence>MRNFSDILLSQDWQNPHIVKWHCRTPHVPLHSYRTEQEARLDVGGNRQSLNGQWRFALFEKPEAVEPAVIDPDFDDSAWAHIPVPSNWQMQGFDKPIYTNIQYPFADRPPYVPQDNPTGCYRHRFTLEKQALTESIRIVFDGVNSAFHLWCNGHWVGYSQDSRLPAEFELTPYLQEGENLLVAMVLRWSDGSYLEDQDMWWLSGIFRDVYLYRKPILAIEDFFIRTELDALYQHAELRVETRLSQVTRHHQVQVALFDAQGECVARSQALHTGQRVVDEKGAWHDKTEHSLAICSPTLWSDEAPYLYRCVICLLDEDGAPIEFESAAVGFRKVEITQGLLKLNGQPLLIRGVNRHEHHPELGHVMDEASMRRDIELMKQHNFNAVRTAHYPNHPRWYELCDEYGLYVVDEANLETHGQFPMSRLSNDPQWVNAYLQRMIGMVERDKNHPCVIIWSLGNESGIGTNHHAMYQWTKQRDPSRPVQYEGGGANTAATDIVCPMYARVDQHQPHPAVPKYALKNWISLPQENRPLILCEYAHAMGNSLGAFYKYWQAFREFPRLQGGFIWDWVDQGISKWDSEGRHYWGYGGDFGDTINDRQFCINGLLFPDRTPHPALHEVKKVQQPYQFSLSYPKLTIHNERLFAALPLELVVSVLCDGQEIKQERLPLDIAPRGTITLDLASLPMLPEHEYHLNAVLLCREDQPWSNAGHCIASEQWCLQPRRSMLPKITHAPLPQWQQDGDKVRIEAANQQWQFNRQTGLLEQWWQNGQPVLSEPLRDNFYRAVLDNDIGTSEAQHLDPNSWIARWHAAGLDKLRVECDDLRVTTLNESVEVVIDVAHYHQQALALRTRWRYQIFGDARVELNVEVMLCSDLPPLPRVGLTLALPVAENPVSWFGRGPHENYPDRLQSAHVGRYTATVDELHTPYIFPSENGLRCDTRQLQVGALVVEGHFHFSLSRYSQTMLDKAKHSNELVAGDKWYLNLDAQHMGVGGDDSWSQSVHPEFLLTQPHYQYQLTLRVKASSPQ</sequence>
<keyword id="KW-0326">Glycosidase</keyword>
<keyword id="KW-0378">Hydrolase</keyword>
<keyword id="KW-0460">Magnesium</keyword>
<keyword id="KW-0479">Metal-binding</keyword>
<keyword id="KW-0915">Sodium</keyword>
<evidence type="ECO:0000255" key="1">
    <source>
        <dbReference type="HAMAP-Rule" id="MF_01687"/>
    </source>
</evidence>
<evidence type="ECO:0000305" key="2"/>
<protein>
    <recommendedName>
        <fullName evidence="1">Beta-galactosidase</fullName>
        <shortName evidence="1">Beta-gal</shortName>
        <ecNumber evidence="1">3.2.1.23</ecNumber>
    </recommendedName>
    <alternativeName>
        <fullName evidence="1">Lactase</fullName>
    </alternativeName>
</protein>
<organism>
    <name type="scientific">Vibrio cholerae serotype O1 (strain ATCC 39541 / Classical Ogawa 395 / O395)</name>
    <dbReference type="NCBI Taxonomy" id="345073"/>
    <lineage>
        <taxon>Bacteria</taxon>
        <taxon>Pseudomonadati</taxon>
        <taxon>Pseudomonadota</taxon>
        <taxon>Gammaproteobacteria</taxon>
        <taxon>Vibrionales</taxon>
        <taxon>Vibrionaceae</taxon>
        <taxon>Vibrio</taxon>
    </lineage>
</organism>
<gene>
    <name evidence="1" type="primary">lacZ</name>
    <name type="ordered locus">VC0395_A1917</name>
    <name type="ordered locus">VC395_2453</name>
</gene>
<comment type="catalytic activity">
    <reaction evidence="1">
        <text>Hydrolysis of terminal non-reducing beta-D-galactose residues in beta-D-galactosides.</text>
        <dbReference type="EC" id="3.2.1.23"/>
    </reaction>
</comment>
<comment type="cofactor">
    <cofactor evidence="1">
        <name>Mg(2+)</name>
        <dbReference type="ChEBI" id="CHEBI:18420"/>
    </cofactor>
    <text evidence="1">Binds 2 magnesium ions per monomer.</text>
</comment>
<comment type="cofactor">
    <cofactor evidence="1">
        <name>Na(+)</name>
        <dbReference type="ChEBI" id="CHEBI:29101"/>
    </cofactor>
    <text evidence="1">Binds 1 sodium ion per monomer.</text>
</comment>
<comment type="subunit">
    <text evidence="1">Homotetramer.</text>
</comment>
<comment type="similarity">
    <text evidence="1">Belongs to the glycosyl hydrolase 2 family.</text>
</comment>
<comment type="sequence caution" evidence="2">
    <conflict type="erroneous initiation">
        <sequence resource="EMBL-CDS" id="ABQ20296"/>
    </conflict>
</comment>
<comment type="sequence caution" evidence="2">
    <conflict type="erroneous initiation">
        <sequence resource="EMBL-CDS" id="ACP10443"/>
    </conflict>
</comment>